<proteinExistence type="inferred from homology"/>
<gene>
    <name evidence="1" type="primary">infA</name>
    <name type="ordered locus">BT_2705</name>
</gene>
<organism>
    <name type="scientific">Bacteroides thetaiotaomicron (strain ATCC 29148 / DSM 2079 / JCM 5827 / CCUG 10774 / NCTC 10582 / VPI-5482 / E50)</name>
    <dbReference type="NCBI Taxonomy" id="226186"/>
    <lineage>
        <taxon>Bacteria</taxon>
        <taxon>Pseudomonadati</taxon>
        <taxon>Bacteroidota</taxon>
        <taxon>Bacteroidia</taxon>
        <taxon>Bacteroidales</taxon>
        <taxon>Bacteroidaceae</taxon>
        <taxon>Bacteroides</taxon>
    </lineage>
</organism>
<feature type="chain" id="PRO_0000095739" description="Translation initiation factor IF-1">
    <location>
        <begin position="1"/>
        <end position="72"/>
    </location>
</feature>
<feature type="domain" description="S1-like" evidence="1">
    <location>
        <begin position="1"/>
        <end position="72"/>
    </location>
</feature>
<sequence>MAKQSAIEQDGVIVEALSNAMFRVELENGHEITAHISGKMRMHYIKILPGDKVRVEMSPYDLSKGRIVFRYK</sequence>
<dbReference type="EMBL" id="AE015928">
    <property type="protein sequence ID" value="AAO77811.1"/>
    <property type="molecule type" value="Genomic_DNA"/>
</dbReference>
<dbReference type="RefSeq" id="NP_811617.1">
    <property type="nucleotide sequence ID" value="NC_004663.1"/>
</dbReference>
<dbReference type="RefSeq" id="WP_002558052.1">
    <property type="nucleotide sequence ID" value="NZ_UYXG01000001.1"/>
</dbReference>
<dbReference type="SMR" id="Q8A498"/>
<dbReference type="FunCoup" id="Q8A498">
    <property type="interactions" value="415"/>
</dbReference>
<dbReference type="STRING" id="226186.BT_2705"/>
<dbReference type="PaxDb" id="226186-BT_2705"/>
<dbReference type="EnsemblBacteria" id="AAO77811">
    <property type="protein sequence ID" value="AAO77811"/>
    <property type="gene ID" value="BT_2705"/>
</dbReference>
<dbReference type="GeneID" id="9711838"/>
<dbReference type="KEGG" id="bth:BT_2705"/>
<dbReference type="PATRIC" id="fig|226186.12.peg.2748"/>
<dbReference type="eggNOG" id="COG0361">
    <property type="taxonomic scope" value="Bacteria"/>
</dbReference>
<dbReference type="HOGENOM" id="CLU_151267_1_0_10"/>
<dbReference type="InParanoid" id="Q8A498"/>
<dbReference type="OrthoDB" id="9803250at2"/>
<dbReference type="PRO" id="PR:Q8A498"/>
<dbReference type="Proteomes" id="UP000001414">
    <property type="component" value="Chromosome"/>
</dbReference>
<dbReference type="GO" id="GO:0005829">
    <property type="term" value="C:cytosol"/>
    <property type="evidence" value="ECO:0000318"/>
    <property type="project" value="GO_Central"/>
</dbReference>
<dbReference type="GO" id="GO:0043022">
    <property type="term" value="F:ribosome binding"/>
    <property type="evidence" value="ECO:0000318"/>
    <property type="project" value="GO_Central"/>
</dbReference>
<dbReference type="GO" id="GO:0019843">
    <property type="term" value="F:rRNA binding"/>
    <property type="evidence" value="ECO:0007669"/>
    <property type="project" value="UniProtKB-UniRule"/>
</dbReference>
<dbReference type="GO" id="GO:0003743">
    <property type="term" value="F:translation initiation factor activity"/>
    <property type="evidence" value="ECO:0007669"/>
    <property type="project" value="UniProtKB-UniRule"/>
</dbReference>
<dbReference type="CDD" id="cd04451">
    <property type="entry name" value="S1_IF1"/>
    <property type="match status" value="1"/>
</dbReference>
<dbReference type="FunFam" id="2.40.50.140:FF:000002">
    <property type="entry name" value="Translation initiation factor IF-1"/>
    <property type="match status" value="1"/>
</dbReference>
<dbReference type="Gene3D" id="2.40.50.140">
    <property type="entry name" value="Nucleic acid-binding proteins"/>
    <property type="match status" value="1"/>
</dbReference>
<dbReference type="HAMAP" id="MF_00075">
    <property type="entry name" value="IF_1"/>
    <property type="match status" value="1"/>
</dbReference>
<dbReference type="InterPro" id="IPR012340">
    <property type="entry name" value="NA-bd_OB-fold"/>
</dbReference>
<dbReference type="InterPro" id="IPR006196">
    <property type="entry name" value="RNA-binding_domain_S1_IF1"/>
</dbReference>
<dbReference type="InterPro" id="IPR003029">
    <property type="entry name" value="S1_domain"/>
</dbReference>
<dbReference type="InterPro" id="IPR004368">
    <property type="entry name" value="TIF_IF1"/>
</dbReference>
<dbReference type="NCBIfam" id="TIGR00008">
    <property type="entry name" value="infA"/>
    <property type="match status" value="1"/>
</dbReference>
<dbReference type="PANTHER" id="PTHR33370">
    <property type="entry name" value="TRANSLATION INITIATION FACTOR IF-1, CHLOROPLASTIC"/>
    <property type="match status" value="1"/>
</dbReference>
<dbReference type="PANTHER" id="PTHR33370:SF1">
    <property type="entry name" value="TRANSLATION INITIATION FACTOR IF-1, CHLOROPLASTIC"/>
    <property type="match status" value="1"/>
</dbReference>
<dbReference type="Pfam" id="PF01176">
    <property type="entry name" value="eIF-1a"/>
    <property type="match status" value="1"/>
</dbReference>
<dbReference type="SMART" id="SM00316">
    <property type="entry name" value="S1"/>
    <property type="match status" value="1"/>
</dbReference>
<dbReference type="SUPFAM" id="SSF50249">
    <property type="entry name" value="Nucleic acid-binding proteins"/>
    <property type="match status" value="1"/>
</dbReference>
<dbReference type="PROSITE" id="PS50832">
    <property type="entry name" value="S1_IF1_TYPE"/>
    <property type="match status" value="1"/>
</dbReference>
<name>IF1_BACTN</name>
<comment type="function">
    <text evidence="1">One of the essential components for the initiation of protein synthesis. Stabilizes the binding of IF-2 and IF-3 on the 30S subunit to which N-formylmethionyl-tRNA(fMet) subsequently binds. Helps modulate mRNA selection, yielding the 30S pre-initiation complex (PIC). Upon addition of the 50S ribosomal subunit IF-1, IF-2 and IF-3 are released leaving the mature 70S translation initiation complex.</text>
</comment>
<comment type="subunit">
    <text evidence="1">Component of the 30S ribosomal translation pre-initiation complex which assembles on the 30S ribosome in the order IF-2 and IF-3, IF-1 and N-formylmethionyl-tRNA(fMet); mRNA recruitment can occur at any time during PIC assembly.</text>
</comment>
<comment type="subcellular location">
    <subcellularLocation>
        <location evidence="1">Cytoplasm</location>
    </subcellularLocation>
</comment>
<comment type="similarity">
    <text evidence="1">Belongs to the IF-1 family.</text>
</comment>
<reference key="1">
    <citation type="journal article" date="2003" name="Science">
        <title>A genomic view of the human-Bacteroides thetaiotaomicron symbiosis.</title>
        <authorList>
            <person name="Xu J."/>
            <person name="Bjursell M.K."/>
            <person name="Himrod J."/>
            <person name="Deng S."/>
            <person name="Carmichael L.K."/>
            <person name="Chiang H.C."/>
            <person name="Hooper L.V."/>
            <person name="Gordon J.I."/>
        </authorList>
    </citation>
    <scope>NUCLEOTIDE SEQUENCE [LARGE SCALE GENOMIC DNA]</scope>
    <source>
        <strain>ATCC 29148 / DSM 2079 / JCM 5827 / CCUG 10774 / NCTC 10582 / VPI-5482 / E50</strain>
    </source>
</reference>
<protein>
    <recommendedName>
        <fullName evidence="1">Translation initiation factor IF-1</fullName>
    </recommendedName>
</protein>
<keyword id="KW-0963">Cytoplasm</keyword>
<keyword id="KW-0396">Initiation factor</keyword>
<keyword id="KW-0648">Protein biosynthesis</keyword>
<keyword id="KW-1185">Reference proteome</keyword>
<keyword id="KW-0694">RNA-binding</keyword>
<keyword id="KW-0699">rRNA-binding</keyword>
<evidence type="ECO:0000255" key="1">
    <source>
        <dbReference type="HAMAP-Rule" id="MF_00075"/>
    </source>
</evidence>
<accession>Q8A498</accession>